<keyword id="KW-0687">Ribonucleoprotein</keyword>
<keyword id="KW-0689">Ribosomal protein</keyword>
<keyword id="KW-0694">RNA-binding</keyword>
<keyword id="KW-0699">rRNA-binding</keyword>
<keyword id="KW-0820">tRNA-binding</keyword>
<name>RL5_NITEC</name>
<accession>Q0AII4</accession>
<protein>
    <recommendedName>
        <fullName evidence="1">Large ribosomal subunit protein uL5</fullName>
    </recommendedName>
    <alternativeName>
        <fullName evidence="2">50S ribosomal protein L5</fullName>
    </alternativeName>
</protein>
<dbReference type="EMBL" id="CP000450">
    <property type="protein sequence ID" value="ABI58842.1"/>
    <property type="molecule type" value="Genomic_DNA"/>
</dbReference>
<dbReference type="RefSeq" id="WP_011633684.1">
    <property type="nucleotide sequence ID" value="NC_008344.1"/>
</dbReference>
<dbReference type="SMR" id="Q0AII4"/>
<dbReference type="STRING" id="335283.Neut_0570"/>
<dbReference type="KEGG" id="net:Neut_0570"/>
<dbReference type="eggNOG" id="COG0094">
    <property type="taxonomic scope" value="Bacteria"/>
</dbReference>
<dbReference type="HOGENOM" id="CLU_061015_2_1_4"/>
<dbReference type="OrthoDB" id="9806626at2"/>
<dbReference type="Proteomes" id="UP000001966">
    <property type="component" value="Chromosome"/>
</dbReference>
<dbReference type="GO" id="GO:1990904">
    <property type="term" value="C:ribonucleoprotein complex"/>
    <property type="evidence" value="ECO:0007669"/>
    <property type="project" value="UniProtKB-KW"/>
</dbReference>
<dbReference type="GO" id="GO:0005840">
    <property type="term" value="C:ribosome"/>
    <property type="evidence" value="ECO:0007669"/>
    <property type="project" value="UniProtKB-KW"/>
</dbReference>
<dbReference type="GO" id="GO:0019843">
    <property type="term" value="F:rRNA binding"/>
    <property type="evidence" value="ECO:0007669"/>
    <property type="project" value="UniProtKB-UniRule"/>
</dbReference>
<dbReference type="GO" id="GO:0003735">
    <property type="term" value="F:structural constituent of ribosome"/>
    <property type="evidence" value="ECO:0007669"/>
    <property type="project" value="InterPro"/>
</dbReference>
<dbReference type="GO" id="GO:0000049">
    <property type="term" value="F:tRNA binding"/>
    <property type="evidence" value="ECO:0007669"/>
    <property type="project" value="UniProtKB-UniRule"/>
</dbReference>
<dbReference type="GO" id="GO:0006412">
    <property type="term" value="P:translation"/>
    <property type="evidence" value="ECO:0007669"/>
    <property type="project" value="UniProtKB-UniRule"/>
</dbReference>
<dbReference type="FunFam" id="3.30.1440.10:FF:000001">
    <property type="entry name" value="50S ribosomal protein L5"/>
    <property type="match status" value="1"/>
</dbReference>
<dbReference type="Gene3D" id="3.30.1440.10">
    <property type="match status" value="1"/>
</dbReference>
<dbReference type="HAMAP" id="MF_01333_B">
    <property type="entry name" value="Ribosomal_uL5_B"/>
    <property type="match status" value="1"/>
</dbReference>
<dbReference type="InterPro" id="IPR002132">
    <property type="entry name" value="Ribosomal_uL5"/>
</dbReference>
<dbReference type="InterPro" id="IPR020930">
    <property type="entry name" value="Ribosomal_uL5_bac-type"/>
</dbReference>
<dbReference type="InterPro" id="IPR031309">
    <property type="entry name" value="Ribosomal_uL5_C"/>
</dbReference>
<dbReference type="InterPro" id="IPR022803">
    <property type="entry name" value="Ribosomal_uL5_dom_sf"/>
</dbReference>
<dbReference type="InterPro" id="IPR031310">
    <property type="entry name" value="Ribosomal_uL5_N"/>
</dbReference>
<dbReference type="NCBIfam" id="NF000585">
    <property type="entry name" value="PRK00010.1"/>
    <property type="match status" value="1"/>
</dbReference>
<dbReference type="PANTHER" id="PTHR11994">
    <property type="entry name" value="60S RIBOSOMAL PROTEIN L11-RELATED"/>
    <property type="match status" value="1"/>
</dbReference>
<dbReference type="Pfam" id="PF00281">
    <property type="entry name" value="Ribosomal_L5"/>
    <property type="match status" value="1"/>
</dbReference>
<dbReference type="Pfam" id="PF00673">
    <property type="entry name" value="Ribosomal_L5_C"/>
    <property type="match status" value="1"/>
</dbReference>
<dbReference type="PIRSF" id="PIRSF002161">
    <property type="entry name" value="Ribosomal_L5"/>
    <property type="match status" value="1"/>
</dbReference>
<dbReference type="SUPFAM" id="SSF55282">
    <property type="entry name" value="RL5-like"/>
    <property type="match status" value="1"/>
</dbReference>
<organism>
    <name type="scientific">Nitrosomonas eutropha (strain DSM 101675 / C91 / Nm57)</name>
    <dbReference type="NCBI Taxonomy" id="335283"/>
    <lineage>
        <taxon>Bacteria</taxon>
        <taxon>Pseudomonadati</taxon>
        <taxon>Pseudomonadota</taxon>
        <taxon>Betaproteobacteria</taxon>
        <taxon>Nitrosomonadales</taxon>
        <taxon>Nitrosomonadaceae</taxon>
        <taxon>Nitrosomonas</taxon>
    </lineage>
</organism>
<comment type="function">
    <text evidence="1">This is one of the proteins that bind and probably mediate the attachment of the 5S RNA into the large ribosomal subunit, where it forms part of the central protuberance. In the 70S ribosome it contacts protein S13 of the 30S subunit (bridge B1b), connecting the 2 subunits; this bridge is implicated in subunit movement. Contacts the P site tRNA; the 5S rRNA and some of its associated proteins might help stabilize positioning of ribosome-bound tRNAs.</text>
</comment>
<comment type="subunit">
    <text evidence="1">Part of the 50S ribosomal subunit; part of the 5S rRNA/L5/L18/L25 subcomplex. Contacts the 5S rRNA and the P site tRNA. Forms a bridge to the 30S subunit in the 70S ribosome.</text>
</comment>
<comment type="similarity">
    <text evidence="1">Belongs to the universal ribosomal protein uL5 family.</text>
</comment>
<feature type="chain" id="PRO_1000052783" description="Large ribosomal subunit protein uL5">
    <location>
        <begin position="1"/>
        <end position="179"/>
    </location>
</feature>
<reference key="1">
    <citation type="journal article" date="2007" name="Environ. Microbiol.">
        <title>Whole-genome analysis of the ammonia-oxidizing bacterium, Nitrosomonas eutropha C91: implications for niche adaptation.</title>
        <authorList>
            <person name="Stein L.Y."/>
            <person name="Arp D.J."/>
            <person name="Berube P.M."/>
            <person name="Chain P.S."/>
            <person name="Hauser L."/>
            <person name="Jetten M.S."/>
            <person name="Klotz M.G."/>
            <person name="Larimer F.W."/>
            <person name="Norton J.M."/>
            <person name="Op den Camp H.J.M."/>
            <person name="Shin M."/>
            <person name="Wei X."/>
        </authorList>
    </citation>
    <scope>NUCLEOTIDE SEQUENCE [LARGE SCALE GENOMIC DNA]</scope>
    <source>
        <strain>DSM 101675 / C91 / Nm57</strain>
    </source>
</reference>
<proteinExistence type="inferred from homology"/>
<evidence type="ECO:0000255" key="1">
    <source>
        <dbReference type="HAMAP-Rule" id="MF_01333"/>
    </source>
</evidence>
<evidence type="ECO:0000305" key="2"/>
<sequence>MARLFDHYKNIVIKELIQQFNYKTVMQVPKITKITLNMGVGEAAVDKKIMENAVSDLEKISAQKPIITKAKKSIATFKIRQGYPVGCMVTLRGIKMYEFLDRLVSIAIPRIRDFRGIGGKGFDGHGNFNMGIKEQIIFPEIDYDKIDKLRGLNITMTTTAKTDIEAKALLSAFKFPFKN</sequence>
<gene>
    <name evidence="1" type="primary">rplE</name>
    <name type="ordered locus">Neut_0570</name>
</gene>